<evidence type="ECO:0000250" key="1">
    <source>
        <dbReference type="UniProtKB" id="P04798"/>
    </source>
</evidence>
<evidence type="ECO:0000250" key="2">
    <source>
        <dbReference type="UniProtKB" id="Q5K0D9"/>
    </source>
</evidence>
<evidence type="ECO:0000255" key="3"/>
<evidence type="ECO:0000255" key="4">
    <source>
        <dbReference type="PROSITE-ProRule" id="PRU00498"/>
    </source>
</evidence>
<evidence type="ECO:0000269" key="5">
    <source>
    </source>
</evidence>
<evidence type="ECO:0000303" key="6">
    <source>
    </source>
</evidence>
<evidence type="ECO:0000305" key="7"/>
<evidence type="ECO:0000305" key="8">
    <source>
    </source>
</evidence>
<keyword id="KW-0325">Glycoprotein</keyword>
<keyword id="KW-0349">Heme</keyword>
<keyword id="KW-0408">Iron</keyword>
<keyword id="KW-0472">Membrane</keyword>
<keyword id="KW-0479">Metal-binding</keyword>
<keyword id="KW-0503">Monooxygenase</keyword>
<keyword id="KW-0560">Oxidoreductase</keyword>
<keyword id="KW-1185">Reference proteome</keyword>
<keyword id="KW-0812">Transmembrane</keyword>
<keyword id="KW-1133">Transmembrane helix</keyword>
<keyword id="KW-0843">Virulence</keyword>
<proteinExistence type="evidence at transcript level"/>
<organism>
    <name type="scientific">Pyricularia oryzae (strain 70-15 / ATCC MYA-4617 / FGSC 8958)</name>
    <name type="common">Rice blast fungus</name>
    <name type="synonym">Magnaporthe oryzae</name>
    <dbReference type="NCBI Taxonomy" id="242507"/>
    <lineage>
        <taxon>Eukaryota</taxon>
        <taxon>Fungi</taxon>
        <taxon>Dikarya</taxon>
        <taxon>Ascomycota</taxon>
        <taxon>Pezizomycotina</taxon>
        <taxon>Sordariomycetes</taxon>
        <taxon>Sordariomycetidae</taxon>
        <taxon>Magnaporthales</taxon>
        <taxon>Pyriculariaceae</taxon>
        <taxon>Pyricularia</taxon>
    </lineage>
</organism>
<feature type="chain" id="PRO_0000448417" description="Cytochrome P450 monooxygenase ABA2">
    <location>
        <begin position="1"/>
        <end position="521"/>
    </location>
</feature>
<feature type="transmembrane region" description="Helical" evidence="3">
    <location>
        <begin position="15"/>
        <end position="35"/>
    </location>
</feature>
<feature type="binding site" description="axial binding residue" evidence="1">
    <location>
        <position position="458"/>
    </location>
    <ligand>
        <name>heme</name>
        <dbReference type="ChEBI" id="CHEBI:30413"/>
    </ligand>
    <ligandPart>
        <name>Fe</name>
        <dbReference type="ChEBI" id="CHEBI:18248"/>
    </ligandPart>
</feature>
<feature type="glycosylation site" description="N-linked (GlcNAc...) asparagine" evidence="4">
    <location>
        <position position="366"/>
    </location>
</feature>
<comment type="function">
    <text evidence="2 5">Cytochrome P450 monooxygenase involved in the biosynthesis of abscisic acid (ABA), a phytohormone that acts antagonistically toward salicylic acid (SA), jasmonic acid (JA) and ethylene (ETH) signaling, to impede plant defense responses (PubMed:26648962). During pathogen-host interaction, ABA plays a dual role in disease severity by increasing plant susceptibility and accelerating pathogenesis in the fungus itself (PubMed:26648962). The first step of the pathway catalyzes the reaction from farnesyl diphosphate to alpha-ionylideneethane performed by the alpha-ionylideneethane synthase ABA3 via a three-step reaction mechanism involving 2 neutral intermediates, beta-farnesene and allofarnesene (By similarity). The cytochrome P450 monooxygenase ABA1 might then be involved in the conversion of alpha-ionylideneethane to alpha-ionylideneacetic acid (By similarity). Alpha-ionylideneacetic acid is further converted to abscisic acid in 2 steps involving the cytochrome P450 monooxygenase ABA2 and the short-chain dehydrogenase/reductase ABA4, via the intermediates 1'-deoxy-ABA or 1',4'-trans-diol-ABA, depending on the order of action of these 2 enzymes (By similarity). ABA2 is responsible for the hydroxylation of carbon atom C-1' and ABA4 might be involved in the oxidation of the C-4' carbon atom (By similarity).</text>
</comment>
<comment type="cofactor">
    <cofactor evidence="1">
        <name>heme</name>
        <dbReference type="ChEBI" id="CHEBI:30413"/>
    </cofactor>
</comment>
<comment type="pathway">
    <text evidence="5">Hormone biosynthesis.</text>
</comment>
<comment type="subcellular location">
    <subcellularLocation>
        <location evidence="3">Membrane</location>
        <topology evidence="3">Single-pass membrane protein</topology>
    </subcellularLocation>
</comment>
<comment type="induction">
    <text evidence="5">Expression is induced in spores.</text>
</comment>
<comment type="similarity">
    <text evidence="7">Belongs to the cytochrome P450 family.</text>
</comment>
<dbReference type="EC" id="1.-.-.-" evidence="8"/>
<dbReference type="EMBL" id="CM001233">
    <property type="protein sequence ID" value="EHA53421.1"/>
    <property type="molecule type" value="Genomic_DNA"/>
</dbReference>
<dbReference type="RefSeq" id="XP_003713228.1">
    <property type="nucleotide sequence ID" value="XM_003713180.1"/>
</dbReference>
<dbReference type="SMR" id="G4N2X2"/>
<dbReference type="STRING" id="242507.G4N2X2"/>
<dbReference type="GlyCosmos" id="G4N2X2">
    <property type="glycosylation" value="1 site, No reported glycans"/>
</dbReference>
<dbReference type="EnsemblFungi" id="MGG_07982T0">
    <property type="protein sequence ID" value="MGG_07982T0"/>
    <property type="gene ID" value="MGG_07982"/>
</dbReference>
<dbReference type="GeneID" id="2683909"/>
<dbReference type="KEGG" id="mgr:MGG_07982"/>
<dbReference type="VEuPathDB" id="FungiDB:MGG_07982"/>
<dbReference type="eggNOG" id="KOG0157">
    <property type="taxonomic scope" value="Eukaryota"/>
</dbReference>
<dbReference type="HOGENOM" id="CLU_001570_14_11_1"/>
<dbReference type="InParanoid" id="G4N2X2"/>
<dbReference type="OMA" id="SSWCAHH"/>
<dbReference type="OrthoDB" id="1470350at2759"/>
<dbReference type="Proteomes" id="UP000009058">
    <property type="component" value="Chromosome 3"/>
</dbReference>
<dbReference type="GO" id="GO:0016020">
    <property type="term" value="C:membrane"/>
    <property type="evidence" value="ECO:0007669"/>
    <property type="project" value="UniProtKB-SubCell"/>
</dbReference>
<dbReference type="GO" id="GO:0020037">
    <property type="term" value="F:heme binding"/>
    <property type="evidence" value="ECO:0007669"/>
    <property type="project" value="InterPro"/>
</dbReference>
<dbReference type="GO" id="GO:0005506">
    <property type="term" value="F:iron ion binding"/>
    <property type="evidence" value="ECO:0007669"/>
    <property type="project" value="InterPro"/>
</dbReference>
<dbReference type="GO" id="GO:0004497">
    <property type="term" value="F:monooxygenase activity"/>
    <property type="evidence" value="ECO:0007669"/>
    <property type="project" value="UniProtKB-KW"/>
</dbReference>
<dbReference type="GO" id="GO:0016705">
    <property type="term" value="F:oxidoreductase activity, acting on paired donors, with incorporation or reduction of molecular oxygen"/>
    <property type="evidence" value="ECO:0007669"/>
    <property type="project" value="InterPro"/>
</dbReference>
<dbReference type="GO" id="GO:0009688">
    <property type="term" value="P:abscisic acid biosynthetic process"/>
    <property type="evidence" value="ECO:0000250"/>
    <property type="project" value="GO_Central"/>
</dbReference>
<dbReference type="CDD" id="cd11058">
    <property type="entry name" value="CYP60B-like"/>
    <property type="match status" value="1"/>
</dbReference>
<dbReference type="Gene3D" id="1.10.630.10">
    <property type="entry name" value="Cytochrome P450"/>
    <property type="match status" value="1"/>
</dbReference>
<dbReference type="InterPro" id="IPR001128">
    <property type="entry name" value="Cyt_P450"/>
</dbReference>
<dbReference type="InterPro" id="IPR017972">
    <property type="entry name" value="Cyt_P450_CS"/>
</dbReference>
<dbReference type="InterPro" id="IPR002401">
    <property type="entry name" value="Cyt_P450_E_grp-I"/>
</dbReference>
<dbReference type="InterPro" id="IPR036396">
    <property type="entry name" value="Cyt_P450_sf"/>
</dbReference>
<dbReference type="InterPro" id="IPR050121">
    <property type="entry name" value="Cytochrome_P450_monoxygenase"/>
</dbReference>
<dbReference type="PANTHER" id="PTHR24305">
    <property type="entry name" value="CYTOCHROME P450"/>
    <property type="match status" value="1"/>
</dbReference>
<dbReference type="PANTHER" id="PTHR24305:SF210">
    <property type="entry name" value="CYTOCHROME P450 MONOOXYGENASE ASQL-RELATED"/>
    <property type="match status" value="1"/>
</dbReference>
<dbReference type="Pfam" id="PF00067">
    <property type="entry name" value="p450"/>
    <property type="match status" value="1"/>
</dbReference>
<dbReference type="PRINTS" id="PR00463">
    <property type="entry name" value="EP450I"/>
</dbReference>
<dbReference type="PRINTS" id="PR00385">
    <property type="entry name" value="P450"/>
</dbReference>
<dbReference type="SUPFAM" id="SSF48264">
    <property type="entry name" value="Cytochrome P450"/>
    <property type="match status" value="1"/>
</dbReference>
<dbReference type="PROSITE" id="PS00086">
    <property type="entry name" value="CYTOCHROME_P450"/>
    <property type="match status" value="1"/>
</dbReference>
<sequence length="521" mass="58440">MYGTNLLETMGKPTAGHLGMAVTFTILVAFTIHVLRMRFFHPLRRYPGPWLNSITQIPAAWALLRARQPKAYRELHEKYGPIVRVAPNELSFINVEAWDDIYGFLKSTPNFEKSPVFIGAVSPLNGQTGISLANNEEHTRQRRALAAPFTNRALLQQQDILRVHVDKLITALRAKARNKESVNMGEWYTYTTFDIIGDICFAEPFGCLDGGESNEWARAIINIFKAATWDQAIRRVAGTGTLLHKALVKIIIPAEAAQWRTIHFSNSKAKTLARLADPDRQHPDLIKHILDSEDSRAALSPTEIILNMVLFISAGSETTANTMTGWTYFMLRHPEARARATAEVRAAFASPRDIKWETVRALPYLNATLEEALRLFSPAPSNQPRVVPACGAVVAGCPLPSGTTVSVAPWAAVFSARNFADPERFAPERWLDEGGADPRYAADRRGASQPFSTGPRGCMGKNLAYFELRLVLAHLLWHFDLEPTDSAAGRECMRRWEQTDMDTYQTWMKPDLWVDLKEAQR</sequence>
<accession>G4N2X2</accession>
<name>ABA2_PYRO7</name>
<reference key="1">
    <citation type="journal article" date="2005" name="Nature">
        <title>The genome sequence of the rice blast fungus Magnaporthe grisea.</title>
        <authorList>
            <person name="Dean R.A."/>
            <person name="Talbot N.J."/>
            <person name="Ebbole D.J."/>
            <person name="Farman M.L."/>
            <person name="Mitchell T.K."/>
            <person name="Orbach M.J."/>
            <person name="Thon M.R."/>
            <person name="Kulkarni R."/>
            <person name="Xu J.-R."/>
            <person name="Pan H."/>
            <person name="Read N.D."/>
            <person name="Lee Y.-H."/>
            <person name="Carbone I."/>
            <person name="Brown D."/>
            <person name="Oh Y.Y."/>
            <person name="Donofrio N."/>
            <person name="Jeong J.S."/>
            <person name="Soanes D.M."/>
            <person name="Djonovic S."/>
            <person name="Kolomiets E."/>
            <person name="Rehmeyer C."/>
            <person name="Li W."/>
            <person name="Harding M."/>
            <person name="Kim S."/>
            <person name="Lebrun M.-H."/>
            <person name="Bohnert H."/>
            <person name="Coughlan S."/>
            <person name="Butler J."/>
            <person name="Calvo S.E."/>
            <person name="Ma L.-J."/>
            <person name="Nicol R."/>
            <person name="Purcell S."/>
            <person name="Nusbaum C."/>
            <person name="Galagan J.E."/>
            <person name="Birren B.W."/>
        </authorList>
    </citation>
    <scope>NUCLEOTIDE SEQUENCE [LARGE SCALE GENOMIC DNA]</scope>
    <source>
        <strain>70-15 / ATCC MYA-4617 / FGSC 8958</strain>
    </source>
</reference>
<reference key="2">
    <citation type="journal article" date="2015" name="Front. Plant Sci.">
        <title>Crucial roles of abscisic acid biogenesis in virulence of rice blast fungus Magnaporthe oryzae.</title>
        <authorList>
            <person name="Spence C.A."/>
            <person name="Lakshmanan V."/>
            <person name="Donofrio N."/>
            <person name="Bais H.P."/>
        </authorList>
    </citation>
    <scope>IDENTIFICATION</scope>
    <scope>INDUCTION</scope>
    <scope>FUNCTION</scope>
    <scope>PATHWAY</scope>
</reference>
<reference key="3">
    <citation type="journal article" date="2017" name="Front. Plant Sci.">
        <title>Abscisic acid as pathogen effector and immune regulator.</title>
        <authorList>
            <person name="Lievens L."/>
            <person name="Pollier J."/>
            <person name="Goossens A."/>
            <person name="Beyaert R."/>
            <person name="Staal J."/>
        </authorList>
    </citation>
    <scope>FUNCTION</scope>
</reference>
<protein>
    <recommendedName>
        <fullName evidence="6">Cytochrome P450 monooxygenase ABA2</fullName>
        <ecNumber evidence="8">1.-.-.-</ecNumber>
    </recommendedName>
    <alternativeName>
        <fullName evidence="6">Abscisic acid biosynthesis protein 2</fullName>
    </alternativeName>
</protein>
<gene>
    <name evidence="6" type="primary">ABA2</name>
    <name type="ORF">MGG_07982</name>
</gene>